<dbReference type="EMBL" id="AB017401">
    <property type="protein sequence ID" value="BAA36817.1"/>
    <property type="molecule type" value="Genomic_DNA"/>
</dbReference>
<dbReference type="GO" id="GO:0009507">
    <property type="term" value="C:chloroplast"/>
    <property type="evidence" value="ECO:0007669"/>
    <property type="project" value="UniProtKB-SubCell"/>
</dbReference>
<dbReference type="GO" id="GO:0003723">
    <property type="term" value="F:RNA binding"/>
    <property type="evidence" value="ECO:0007669"/>
    <property type="project" value="UniProtKB-KW"/>
</dbReference>
<dbReference type="GO" id="GO:0006397">
    <property type="term" value="P:mRNA processing"/>
    <property type="evidence" value="ECO:0007669"/>
    <property type="project" value="UniProtKB-KW"/>
</dbReference>
<dbReference type="GO" id="GO:0008380">
    <property type="term" value="P:RNA splicing"/>
    <property type="evidence" value="ECO:0007669"/>
    <property type="project" value="UniProtKB-UniRule"/>
</dbReference>
<dbReference type="GO" id="GO:0008033">
    <property type="term" value="P:tRNA processing"/>
    <property type="evidence" value="ECO:0007669"/>
    <property type="project" value="UniProtKB-KW"/>
</dbReference>
<dbReference type="HAMAP" id="MF_01390">
    <property type="entry name" value="MatK"/>
    <property type="match status" value="1"/>
</dbReference>
<dbReference type="InterPro" id="IPR024937">
    <property type="entry name" value="Domain_X"/>
</dbReference>
<dbReference type="InterPro" id="IPR002866">
    <property type="entry name" value="Maturase_MatK"/>
</dbReference>
<dbReference type="InterPro" id="IPR024942">
    <property type="entry name" value="Maturase_MatK_N"/>
</dbReference>
<dbReference type="PANTHER" id="PTHR34811">
    <property type="entry name" value="MATURASE K"/>
    <property type="match status" value="1"/>
</dbReference>
<dbReference type="PANTHER" id="PTHR34811:SF1">
    <property type="entry name" value="MATURASE K"/>
    <property type="match status" value="1"/>
</dbReference>
<dbReference type="Pfam" id="PF01348">
    <property type="entry name" value="Intron_maturas2"/>
    <property type="match status" value="1"/>
</dbReference>
<dbReference type="Pfam" id="PF01824">
    <property type="entry name" value="MatK_N"/>
    <property type="match status" value="1"/>
</dbReference>
<gene>
    <name evidence="1" type="primary">matK</name>
</gene>
<sequence length="515" mass="61190">MEELQLQGYLEKDGSRQFLYPLIFQEYIYTLAHDHGLNSSIFYEPMEIVGLGYDNKSSSVLVKRLITRMYQQNSLIYSMNDFNQNQFVGHNNSFYSNFDSQMVSEGFAVIAEIPFSLRLVPSSEEIPKSQNLRSIHSIFPFLEDKLSHFNYVLDILIPYPIHLEILVQILQCWIQDVPSLHFLRLFLHEFHNWNNLITPTKSISVFSKENKRLFRILYNSYVSEYEFVFVFLRKQSYYLRSTSSRAFLERTHFYVKIEHLIDVCHNHFQKILWFFKDSFMHYVRYKGKAILASRGTYLLIKKWKCYLVNFWQYNFHFWSKPYRIHINPFSNYSFYFLGYISSVLINPSAVKNQMLENFYLVDTLTQKFDTIVPVIPLIGSLSKAKFCTILGHPISKPIWAELSDSDIIDRFGRICRNLSHYHSGSSKKQSLYRIKYILRLSCARTLARKHKSTVRNLLQRLGSGLLEEFFTEEEQVISPIFPKTTLFPLHGSHRERIWYLDIIRINDLANYLDWS</sequence>
<accession>Q9XPP4</accession>
<reference key="1">
    <citation type="journal article" date="1999" name="J. Plant Res.">
        <title>Molecular systematics of Trilliaceae I. Phylogenetic analyses of Trillium using matK gene sequences.</title>
        <authorList>
            <person name="Kazempour Osaloo S."/>
            <person name="Utech F.H."/>
            <person name="Ohara M."/>
            <person name="Kawano S."/>
        </authorList>
    </citation>
    <scope>NUCLEOTIDE SEQUENCE [GENOMIC DNA]</scope>
    <source>
        <tissue>Leaf</tissue>
    </source>
</reference>
<geneLocation type="chloroplast"/>
<name>MATK_TRIPU</name>
<proteinExistence type="inferred from homology"/>
<comment type="function">
    <text evidence="1">Usually encoded in the trnK tRNA gene intron. Probably assists in splicing its own and other chloroplast group II introns.</text>
</comment>
<comment type="subcellular location">
    <subcellularLocation>
        <location>Plastid</location>
        <location>Chloroplast</location>
    </subcellularLocation>
</comment>
<comment type="similarity">
    <text evidence="1">Belongs to the intron maturase 2 family. MatK subfamily.</text>
</comment>
<evidence type="ECO:0000255" key="1">
    <source>
        <dbReference type="HAMAP-Rule" id="MF_01390"/>
    </source>
</evidence>
<keyword id="KW-0150">Chloroplast</keyword>
<keyword id="KW-0507">mRNA processing</keyword>
<keyword id="KW-0934">Plastid</keyword>
<keyword id="KW-0694">RNA-binding</keyword>
<keyword id="KW-0819">tRNA processing</keyword>
<organism>
    <name type="scientific">Trillium pusillum</name>
    <name type="common">Dwarf wakerobin</name>
    <dbReference type="NCBI Taxonomy" id="82494"/>
    <lineage>
        <taxon>Eukaryota</taxon>
        <taxon>Viridiplantae</taxon>
        <taxon>Streptophyta</taxon>
        <taxon>Embryophyta</taxon>
        <taxon>Tracheophyta</taxon>
        <taxon>Spermatophyta</taxon>
        <taxon>Magnoliopsida</taxon>
        <taxon>Liliopsida</taxon>
        <taxon>Liliales</taxon>
        <taxon>Melanthiaceae</taxon>
        <taxon>Trillium</taxon>
    </lineage>
</organism>
<protein>
    <recommendedName>
        <fullName evidence="1">Maturase K</fullName>
    </recommendedName>
    <alternativeName>
        <fullName evidence="1">Intron maturase</fullName>
    </alternativeName>
</protein>
<feature type="chain" id="PRO_0000143768" description="Maturase K">
    <location>
        <begin position="1"/>
        <end position="515"/>
    </location>
</feature>